<proteinExistence type="inferred from homology"/>
<protein>
    <recommendedName>
        <fullName evidence="1">Large ribosomal subunit protein bL17</fullName>
    </recommendedName>
    <alternativeName>
        <fullName evidence="2">50S ribosomal protein L17</fullName>
    </alternativeName>
</protein>
<dbReference type="EMBL" id="CP000362">
    <property type="protein sequence ID" value="ABG31076.1"/>
    <property type="molecule type" value="Genomic_DNA"/>
</dbReference>
<dbReference type="RefSeq" id="WP_011567696.1">
    <property type="nucleotide sequence ID" value="NC_008209.1"/>
</dbReference>
<dbReference type="SMR" id="Q16AB7"/>
<dbReference type="STRING" id="375451.RD1_1438"/>
<dbReference type="KEGG" id="rde:RD1_1438"/>
<dbReference type="eggNOG" id="COG0203">
    <property type="taxonomic scope" value="Bacteria"/>
</dbReference>
<dbReference type="HOGENOM" id="CLU_074407_2_0_5"/>
<dbReference type="OrthoDB" id="9809073at2"/>
<dbReference type="Proteomes" id="UP000007029">
    <property type="component" value="Chromosome"/>
</dbReference>
<dbReference type="GO" id="GO:0022625">
    <property type="term" value="C:cytosolic large ribosomal subunit"/>
    <property type="evidence" value="ECO:0007669"/>
    <property type="project" value="TreeGrafter"/>
</dbReference>
<dbReference type="GO" id="GO:0003735">
    <property type="term" value="F:structural constituent of ribosome"/>
    <property type="evidence" value="ECO:0007669"/>
    <property type="project" value="InterPro"/>
</dbReference>
<dbReference type="GO" id="GO:0006412">
    <property type="term" value="P:translation"/>
    <property type="evidence" value="ECO:0007669"/>
    <property type="project" value="UniProtKB-UniRule"/>
</dbReference>
<dbReference type="FunFam" id="3.90.1030.10:FF:000001">
    <property type="entry name" value="50S ribosomal protein L17"/>
    <property type="match status" value="1"/>
</dbReference>
<dbReference type="Gene3D" id="3.90.1030.10">
    <property type="entry name" value="Ribosomal protein L17"/>
    <property type="match status" value="1"/>
</dbReference>
<dbReference type="HAMAP" id="MF_01368">
    <property type="entry name" value="Ribosomal_bL17"/>
    <property type="match status" value="1"/>
</dbReference>
<dbReference type="InterPro" id="IPR000456">
    <property type="entry name" value="Ribosomal_bL17"/>
</dbReference>
<dbReference type="InterPro" id="IPR047859">
    <property type="entry name" value="Ribosomal_bL17_CS"/>
</dbReference>
<dbReference type="InterPro" id="IPR036373">
    <property type="entry name" value="Ribosomal_bL17_sf"/>
</dbReference>
<dbReference type="NCBIfam" id="TIGR00059">
    <property type="entry name" value="L17"/>
    <property type="match status" value="1"/>
</dbReference>
<dbReference type="PANTHER" id="PTHR14413:SF16">
    <property type="entry name" value="LARGE RIBOSOMAL SUBUNIT PROTEIN BL17M"/>
    <property type="match status" value="1"/>
</dbReference>
<dbReference type="PANTHER" id="PTHR14413">
    <property type="entry name" value="RIBOSOMAL PROTEIN L17"/>
    <property type="match status" value="1"/>
</dbReference>
<dbReference type="Pfam" id="PF01196">
    <property type="entry name" value="Ribosomal_L17"/>
    <property type="match status" value="1"/>
</dbReference>
<dbReference type="SUPFAM" id="SSF64263">
    <property type="entry name" value="Prokaryotic ribosomal protein L17"/>
    <property type="match status" value="1"/>
</dbReference>
<dbReference type="PROSITE" id="PS01167">
    <property type="entry name" value="RIBOSOMAL_L17"/>
    <property type="match status" value="1"/>
</dbReference>
<evidence type="ECO:0000255" key="1">
    <source>
        <dbReference type="HAMAP-Rule" id="MF_01368"/>
    </source>
</evidence>
<evidence type="ECO:0000305" key="2"/>
<name>RL17_ROSDO</name>
<reference key="1">
    <citation type="journal article" date="2007" name="J. Bacteriol.">
        <title>The complete genome sequence of Roseobacter denitrificans reveals a mixotrophic rather than photosynthetic metabolism.</title>
        <authorList>
            <person name="Swingley W.D."/>
            <person name="Sadekar S."/>
            <person name="Mastrian S.D."/>
            <person name="Matthies H.J."/>
            <person name="Hao J."/>
            <person name="Ramos H."/>
            <person name="Acharya C.R."/>
            <person name="Conrad A.L."/>
            <person name="Taylor H.L."/>
            <person name="Dejesa L.C."/>
            <person name="Shah M.K."/>
            <person name="O'Huallachain M.E."/>
            <person name="Lince M.T."/>
            <person name="Blankenship R.E."/>
            <person name="Beatty J.T."/>
            <person name="Touchman J.W."/>
        </authorList>
    </citation>
    <scope>NUCLEOTIDE SEQUENCE [LARGE SCALE GENOMIC DNA]</scope>
    <source>
        <strain>ATCC 33942 / OCh 114</strain>
    </source>
</reference>
<feature type="chain" id="PRO_0000267934" description="Large ribosomal subunit protein bL17">
    <location>
        <begin position="1"/>
        <end position="140"/>
    </location>
</feature>
<gene>
    <name evidence="1" type="primary">rplQ</name>
    <name type="ordered locus">RD1_1438</name>
</gene>
<comment type="subunit">
    <text evidence="1">Part of the 50S ribosomal subunit. Contacts protein L32.</text>
</comment>
<comment type="similarity">
    <text evidence="1">Belongs to the bacterial ribosomal protein bL17 family.</text>
</comment>
<keyword id="KW-1185">Reference proteome</keyword>
<keyword id="KW-0687">Ribonucleoprotein</keyword>
<keyword id="KW-0689">Ribosomal protein</keyword>
<sequence>MRHARGYRRLNRTHEHRKALWANMAGSLIEHEQIKTTLPKAKELRPIIEKMITLAKRGDLHARRQAASKLKEDQYVAKLFDVLGPRYKDRQGGYVRVLKAGFRYGDMAPMAIIEFVDRDRDAKGAADRARLAAEENAEEA</sequence>
<organism>
    <name type="scientific">Roseobacter denitrificans (strain ATCC 33942 / OCh 114)</name>
    <name type="common">Erythrobacter sp. (strain OCh 114)</name>
    <name type="synonym">Roseobacter denitrificans</name>
    <dbReference type="NCBI Taxonomy" id="375451"/>
    <lineage>
        <taxon>Bacteria</taxon>
        <taxon>Pseudomonadati</taxon>
        <taxon>Pseudomonadota</taxon>
        <taxon>Alphaproteobacteria</taxon>
        <taxon>Rhodobacterales</taxon>
        <taxon>Roseobacteraceae</taxon>
        <taxon>Roseobacter</taxon>
    </lineage>
</organism>
<accession>Q16AB7</accession>